<accession>B3EMI3</accession>
<gene>
    <name evidence="1" type="primary">tsf</name>
    <name type="ordered locus">Cphamn1_2012</name>
</gene>
<sequence length="288" mass="31231">MSQISAKAVKELRDKTGVGMMDCKKALDESGGDMQKAVEYLRKKGAALAAKRAEREASEGVVIVKINDAADTGIILELNCETDFVARGDDFTGFADTIAQTALDGSVDSAEKMMGVSLGEAYDGEKVEDAIKTMTGKLGEKIQLKRLAYVRSEGGLVAGYVHPGSKLGSIVELSGGNSAEAVVLAKDIAMQVAAATPIVVDRSSVPAEYIEKEKEIYRQQALAQGKPEKFVDKIITGRLEKYFQEEVLLEQAYIKDSNTKVSDVLHEFTKQYDMPITVNSFIRYQLGA</sequence>
<name>EFTS_CHLPB</name>
<comment type="function">
    <text evidence="1">Associates with the EF-Tu.GDP complex and induces the exchange of GDP to GTP. It remains bound to the aminoacyl-tRNA.EF-Tu.GTP complex up to the GTP hydrolysis stage on the ribosome.</text>
</comment>
<comment type="subcellular location">
    <subcellularLocation>
        <location evidence="1">Cytoplasm</location>
    </subcellularLocation>
</comment>
<comment type="similarity">
    <text evidence="1">Belongs to the EF-Ts family.</text>
</comment>
<keyword id="KW-0963">Cytoplasm</keyword>
<keyword id="KW-0251">Elongation factor</keyword>
<keyword id="KW-0648">Protein biosynthesis</keyword>
<dbReference type="EMBL" id="CP001101">
    <property type="protein sequence ID" value="ACE04922.1"/>
    <property type="molecule type" value="Genomic_DNA"/>
</dbReference>
<dbReference type="SMR" id="B3EMI3"/>
<dbReference type="STRING" id="331678.Cphamn1_2012"/>
<dbReference type="KEGG" id="cpb:Cphamn1_2012"/>
<dbReference type="eggNOG" id="COG0264">
    <property type="taxonomic scope" value="Bacteria"/>
</dbReference>
<dbReference type="HOGENOM" id="CLU_047155_0_0_10"/>
<dbReference type="OrthoDB" id="9808348at2"/>
<dbReference type="GO" id="GO:0005737">
    <property type="term" value="C:cytoplasm"/>
    <property type="evidence" value="ECO:0007669"/>
    <property type="project" value="UniProtKB-SubCell"/>
</dbReference>
<dbReference type="GO" id="GO:0003746">
    <property type="term" value="F:translation elongation factor activity"/>
    <property type="evidence" value="ECO:0007669"/>
    <property type="project" value="UniProtKB-UniRule"/>
</dbReference>
<dbReference type="CDD" id="cd14275">
    <property type="entry name" value="UBA_EF-Ts"/>
    <property type="match status" value="1"/>
</dbReference>
<dbReference type="FunFam" id="1.10.286.20:FF:000001">
    <property type="entry name" value="Elongation factor Ts"/>
    <property type="match status" value="1"/>
</dbReference>
<dbReference type="FunFam" id="1.10.8.10:FF:000001">
    <property type="entry name" value="Elongation factor Ts"/>
    <property type="match status" value="1"/>
</dbReference>
<dbReference type="Gene3D" id="1.10.286.20">
    <property type="match status" value="1"/>
</dbReference>
<dbReference type="Gene3D" id="1.10.8.10">
    <property type="entry name" value="DNA helicase RuvA subunit, C-terminal domain"/>
    <property type="match status" value="1"/>
</dbReference>
<dbReference type="Gene3D" id="3.30.479.20">
    <property type="entry name" value="Elongation factor Ts, dimerisation domain"/>
    <property type="match status" value="2"/>
</dbReference>
<dbReference type="HAMAP" id="MF_00050">
    <property type="entry name" value="EF_Ts"/>
    <property type="match status" value="1"/>
</dbReference>
<dbReference type="InterPro" id="IPR036402">
    <property type="entry name" value="EF-Ts_dimer_sf"/>
</dbReference>
<dbReference type="InterPro" id="IPR001816">
    <property type="entry name" value="Transl_elong_EFTs/EF1B"/>
</dbReference>
<dbReference type="InterPro" id="IPR014039">
    <property type="entry name" value="Transl_elong_EFTs/EF1B_dimer"/>
</dbReference>
<dbReference type="InterPro" id="IPR018101">
    <property type="entry name" value="Transl_elong_Ts_CS"/>
</dbReference>
<dbReference type="InterPro" id="IPR009060">
    <property type="entry name" value="UBA-like_sf"/>
</dbReference>
<dbReference type="NCBIfam" id="TIGR00116">
    <property type="entry name" value="tsf"/>
    <property type="match status" value="1"/>
</dbReference>
<dbReference type="PANTHER" id="PTHR11741">
    <property type="entry name" value="ELONGATION FACTOR TS"/>
    <property type="match status" value="1"/>
</dbReference>
<dbReference type="PANTHER" id="PTHR11741:SF0">
    <property type="entry name" value="ELONGATION FACTOR TS, MITOCHONDRIAL"/>
    <property type="match status" value="1"/>
</dbReference>
<dbReference type="Pfam" id="PF00889">
    <property type="entry name" value="EF_TS"/>
    <property type="match status" value="1"/>
</dbReference>
<dbReference type="SUPFAM" id="SSF54713">
    <property type="entry name" value="Elongation factor Ts (EF-Ts), dimerisation domain"/>
    <property type="match status" value="2"/>
</dbReference>
<dbReference type="SUPFAM" id="SSF46934">
    <property type="entry name" value="UBA-like"/>
    <property type="match status" value="1"/>
</dbReference>
<dbReference type="PROSITE" id="PS01126">
    <property type="entry name" value="EF_TS_1"/>
    <property type="match status" value="1"/>
</dbReference>
<dbReference type="PROSITE" id="PS01127">
    <property type="entry name" value="EF_TS_2"/>
    <property type="match status" value="1"/>
</dbReference>
<reference key="1">
    <citation type="submission" date="2008-06" db="EMBL/GenBank/DDBJ databases">
        <title>Complete sequence of Chlorobium phaeobacteroides BS1.</title>
        <authorList>
            <consortium name="US DOE Joint Genome Institute"/>
            <person name="Lucas S."/>
            <person name="Copeland A."/>
            <person name="Lapidus A."/>
            <person name="Glavina del Rio T."/>
            <person name="Dalin E."/>
            <person name="Tice H."/>
            <person name="Bruce D."/>
            <person name="Goodwin L."/>
            <person name="Pitluck S."/>
            <person name="Schmutz J."/>
            <person name="Larimer F."/>
            <person name="Land M."/>
            <person name="Hauser L."/>
            <person name="Kyrpides N."/>
            <person name="Ovchinnikova G."/>
            <person name="Li T."/>
            <person name="Liu Z."/>
            <person name="Zhao F."/>
            <person name="Overmann J."/>
            <person name="Bryant D.A."/>
            <person name="Richardson P."/>
        </authorList>
    </citation>
    <scope>NUCLEOTIDE SEQUENCE [LARGE SCALE GENOMIC DNA]</scope>
    <source>
        <strain>BS1</strain>
    </source>
</reference>
<proteinExistence type="inferred from homology"/>
<protein>
    <recommendedName>
        <fullName evidence="1">Elongation factor Ts</fullName>
        <shortName evidence="1">EF-Ts</shortName>
    </recommendedName>
</protein>
<feature type="chain" id="PRO_1000116710" description="Elongation factor Ts">
    <location>
        <begin position="1"/>
        <end position="288"/>
    </location>
</feature>
<feature type="region of interest" description="Involved in Mg(2+) ion dislocation from EF-Tu" evidence="1">
    <location>
        <begin position="82"/>
        <end position="85"/>
    </location>
</feature>
<evidence type="ECO:0000255" key="1">
    <source>
        <dbReference type="HAMAP-Rule" id="MF_00050"/>
    </source>
</evidence>
<organism>
    <name type="scientific">Chlorobium phaeobacteroides (strain BS1)</name>
    <dbReference type="NCBI Taxonomy" id="331678"/>
    <lineage>
        <taxon>Bacteria</taxon>
        <taxon>Pseudomonadati</taxon>
        <taxon>Chlorobiota</taxon>
        <taxon>Chlorobiia</taxon>
        <taxon>Chlorobiales</taxon>
        <taxon>Chlorobiaceae</taxon>
        <taxon>Chlorobium/Pelodictyon group</taxon>
        <taxon>Chlorobium</taxon>
    </lineage>
</organism>